<sequence>MEGKIISVNGPVVDIYFPNDVPHIYEALEVENPIKNEKLVLETRILFGENKVRAIALGSTEGISRGLTVKRTFHPISVPVSEEILGRVVNVFGEPIDGGEKIRGEVTPIIKNAAEFRRVQPSYSILETGIKAIDLLTPFPQGGKIGLFGGAGVGKTVLIMELIHNVAVAHGGISVFAGIGERSREGNELWLEMKESGVLSKAALVFGQMNEPPGVRMRVPLTALTIAEYFRDYLGKDVLLLMDNIFRYVQAGMEVSSMLGRIPSAVGYQPTLITELGEVEERILSTDTGSITAVQAVYVPADDLTDPAPATIFSHLDSTLVLSRSIAEMGIYPAVDPLASSSQILEPKFVGYEHAEVARKVVEILQHYESLKDIISILGVEELSEEDRIIVNRARKIQMFLSQPLFVASAYTNIPGVYVPREKTIEGFKAIIEGEVDDLPEDAFYMVGTLEDVKKKAEEHGALMY</sequence>
<proteinExistence type="inferred from homology"/>
<keyword id="KW-0066">ATP synthesis</keyword>
<keyword id="KW-0067">ATP-binding</keyword>
<keyword id="KW-0997">Cell inner membrane</keyword>
<keyword id="KW-1003">Cell membrane</keyword>
<keyword id="KW-0139">CF(1)</keyword>
<keyword id="KW-0375">Hydrogen ion transport</keyword>
<keyword id="KW-0406">Ion transport</keyword>
<keyword id="KW-0472">Membrane</keyword>
<keyword id="KW-0547">Nucleotide-binding</keyword>
<keyword id="KW-1278">Translocase</keyword>
<keyword id="KW-0813">Transport</keyword>
<protein>
    <recommendedName>
        <fullName evidence="1">ATP synthase subunit beta</fullName>
        <ecNumber evidence="1">7.1.2.2</ecNumber>
    </recommendedName>
    <alternativeName>
        <fullName evidence="1">ATP synthase F1 sector subunit beta</fullName>
    </alternativeName>
    <alternativeName>
        <fullName evidence="1">F-ATPase subunit beta</fullName>
    </alternativeName>
</protein>
<dbReference type="EC" id="7.1.2.2" evidence="1"/>
<dbReference type="EMBL" id="CP001146">
    <property type="protein sequence ID" value="ACI18423.1"/>
    <property type="molecule type" value="Genomic_DNA"/>
</dbReference>
<dbReference type="RefSeq" id="WP_012547055.1">
    <property type="nucleotide sequence ID" value="NC_011297.1"/>
</dbReference>
<dbReference type="SMR" id="B5YBP8"/>
<dbReference type="STRING" id="309799.DICTH_1858"/>
<dbReference type="PaxDb" id="309799-DICTH_1858"/>
<dbReference type="KEGG" id="dth:DICTH_1858"/>
<dbReference type="eggNOG" id="COG0055">
    <property type="taxonomic scope" value="Bacteria"/>
</dbReference>
<dbReference type="HOGENOM" id="CLU_022398_0_2_0"/>
<dbReference type="OrthoDB" id="9801639at2"/>
<dbReference type="Proteomes" id="UP000001733">
    <property type="component" value="Chromosome"/>
</dbReference>
<dbReference type="GO" id="GO:0005886">
    <property type="term" value="C:plasma membrane"/>
    <property type="evidence" value="ECO:0007669"/>
    <property type="project" value="UniProtKB-SubCell"/>
</dbReference>
<dbReference type="GO" id="GO:0045259">
    <property type="term" value="C:proton-transporting ATP synthase complex"/>
    <property type="evidence" value="ECO:0007669"/>
    <property type="project" value="UniProtKB-KW"/>
</dbReference>
<dbReference type="GO" id="GO:0005524">
    <property type="term" value="F:ATP binding"/>
    <property type="evidence" value="ECO:0007669"/>
    <property type="project" value="UniProtKB-UniRule"/>
</dbReference>
<dbReference type="GO" id="GO:0016887">
    <property type="term" value="F:ATP hydrolysis activity"/>
    <property type="evidence" value="ECO:0007669"/>
    <property type="project" value="InterPro"/>
</dbReference>
<dbReference type="GO" id="GO:0046933">
    <property type="term" value="F:proton-transporting ATP synthase activity, rotational mechanism"/>
    <property type="evidence" value="ECO:0007669"/>
    <property type="project" value="UniProtKB-UniRule"/>
</dbReference>
<dbReference type="CDD" id="cd18110">
    <property type="entry name" value="ATP-synt_F1_beta_C"/>
    <property type="match status" value="1"/>
</dbReference>
<dbReference type="CDD" id="cd18115">
    <property type="entry name" value="ATP-synt_F1_beta_N"/>
    <property type="match status" value="1"/>
</dbReference>
<dbReference type="CDD" id="cd01133">
    <property type="entry name" value="F1-ATPase_beta_CD"/>
    <property type="match status" value="1"/>
</dbReference>
<dbReference type="FunFam" id="1.10.1140.10:FF:000005">
    <property type="entry name" value="ATP synthase subunit beta"/>
    <property type="match status" value="1"/>
</dbReference>
<dbReference type="FunFam" id="3.40.50.300:FF:001630">
    <property type="entry name" value="ATP synthase subunit beta"/>
    <property type="match status" value="1"/>
</dbReference>
<dbReference type="Gene3D" id="2.40.10.170">
    <property type="match status" value="1"/>
</dbReference>
<dbReference type="Gene3D" id="1.10.1140.10">
    <property type="entry name" value="Bovine Mitochondrial F1-atpase, Atp Synthase Beta Chain, Chain D, domain 3"/>
    <property type="match status" value="1"/>
</dbReference>
<dbReference type="Gene3D" id="3.40.50.300">
    <property type="entry name" value="P-loop containing nucleotide triphosphate hydrolases"/>
    <property type="match status" value="1"/>
</dbReference>
<dbReference type="HAMAP" id="MF_01347">
    <property type="entry name" value="ATP_synth_beta_bact"/>
    <property type="match status" value="1"/>
</dbReference>
<dbReference type="InterPro" id="IPR003593">
    <property type="entry name" value="AAA+_ATPase"/>
</dbReference>
<dbReference type="InterPro" id="IPR055190">
    <property type="entry name" value="ATP-synt_VA_C"/>
</dbReference>
<dbReference type="InterPro" id="IPR005722">
    <property type="entry name" value="ATP_synth_F1_bsu"/>
</dbReference>
<dbReference type="InterPro" id="IPR020003">
    <property type="entry name" value="ATPase_a/bsu_AS"/>
</dbReference>
<dbReference type="InterPro" id="IPR050053">
    <property type="entry name" value="ATPase_alpha/beta_chains"/>
</dbReference>
<dbReference type="InterPro" id="IPR004100">
    <property type="entry name" value="ATPase_F1/V1/A1_a/bsu_N"/>
</dbReference>
<dbReference type="InterPro" id="IPR036121">
    <property type="entry name" value="ATPase_F1/V1/A1_a/bsu_N_sf"/>
</dbReference>
<dbReference type="InterPro" id="IPR000194">
    <property type="entry name" value="ATPase_F1/V1/A1_a/bsu_nucl-bd"/>
</dbReference>
<dbReference type="InterPro" id="IPR024034">
    <property type="entry name" value="ATPase_F1/V1_b/a_C"/>
</dbReference>
<dbReference type="InterPro" id="IPR027417">
    <property type="entry name" value="P-loop_NTPase"/>
</dbReference>
<dbReference type="NCBIfam" id="TIGR01039">
    <property type="entry name" value="atpD"/>
    <property type="match status" value="1"/>
</dbReference>
<dbReference type="PANTHER" id="PTHR15184">
    <property type="entry name" value="ATP SYNTHASE"/>
    <property type="match status" value="1"/>
</dbReference>
<dbReference type="PANTHER" id="PTHR15184:SF71">
    <property type="entry name" value="ATP SYNTHASE SUBUNIT BETA, MITOCHONDRIAL"/>
    <property type="match status" value="1"/>
</dbReference>
<dbReference type="Pfam" id="PF00006">
    <property type="entry name" value="ATP-synt_ab"/>
    <property type="match status" value="1"/>
</dbReference>
<dbReference type="Pfam" id="PF02874">
    <property type="entry name" value="ATP-synt_ab_N"/>
    <property type="match status" value="1"/>
</dbReference>
<dbReference type="Pfam" id="PF22919">
    <property type="entry name" value="ATP-synt_VA_C"/>
    <property type="match status" value="1"/>
</dbReference>
<dbReference type="SMART" id="SM00382">
    <property type="entry name" value="AAA"/>
    <property type="match status" value="1"/>
</dbReference>
<dbReference type="SUPFAM" id="SSF47917">
    <property type="entry name" value="C-terminal domain of alpha and beta subunits of F1 ATP synthase"/>
    <property type="match status" value="1"/>
</dbReference>
<dbReference type="SUPFAM" id="SSF50615">
    <property type="entry name" value="N-terminal domain of alpha and beta subunits of F1 ATP synthase"/>
    <property type="match status" value="1"/>
</dbReference>
<dbReference type="SUPFAM" id="SSF52540">
    <property type="entry name" value="P-loop containing nucleoside triphosphate hydrolases"/>
    <property type="match status" value="1"/>
</dbReference>
<dbReference type="PROSITE" id="PS00152">
    <property type="entry name" value="ATPASE_ALPHA_BETA"/>
    <property type="match status" value="1"/>
</dbReference>
<comment type="function">
    <text evidence="1">Produces ATP from ADP in the presence of a proton gradient across the membrane. The catalytic sites are hosted primarily by the beta subunits.</text>
</comment>
<comment type="catalytic activity">
    <reaction evidence="1">
        <text>ATP + H2O + 4 H(+)(in) = ADP + phosphate + 5 H(+)(out)</text>
        <dbReference type="Rhea" id="RHEA:57720"/>
        <dbReference type="ChEBI" id="CHEBI:15377"/>
        <dbReference type="ChEBI" id="CHEBI:15378"/>
        <dbReference type="ChEBI" id="CHEBI:30616"/>
        <dbReference type="ChEBI" id="CHEBI:43474"/>
        <dbReference type="ChEBI" id="CHEBI:456216"/>
        <dbReference type="EC" id="7.1.2.2"/>
    </reaction>
</comment>
<comment type="subunit">
    <text evidence="1">F-type ATPases have 2 components, CF(1) - the catalytic core - and CF(0) - the membrane proton channel. CF(1) has five subunits: alpha(3), beta(3), gamma(1), delta(1), epsilon(1). CF(0) has three main subunits: a(1), b(2) and c(9-12). The alpha and beta chains form an alternating ring which encloses part of the gamma chain. CF(1) is attached to CF(0) by a central stalk formed by the gamma and epsilon chains, while a peripheral stalk is formed by the delta and b chains.</text>
</comment>
<comment type="subcellular location">
    <subcellularLocation>
        <location evidence="1">Cell inner membrane</location>
        <topology evidence="1">Peripheral membrane protein</topology>
    </subcellularLocation>
</comment>
<comment type="similarity">
    <text evidence="1">Belongs to the ATPase alpha/beta chains family.</text>
</comment>
<feature type="chain" id="PRO_1000143497" description="ATP synthase subunit beta">
    <location>
        <begin position="1"/>
        <end position="465"/>
    </location>
</feature>
<feature type="binding site" evidence="1">
    <location>
        <begin position="149"/>
        <end position="156"/>
    </location>
    <ligand>
        <name>ATP</name>
        <dbReference type="ChEBI" id="CHEBI:30616"/>
    </ligand>
</feature>
<accession>B5YBP8</accession>
<evidence type="ECO:0000255" key="1">
    <source>
        <dbReference type="HAMAP-Rule" id="MF_01347"/>
    </source>
</evidence>
<name>ATPB_DICT6</name>
<reference key="1">
    <citation type="journal article" date="2014" name="Genome Announc.">
        <title>Complete Genome Sequence of the Extreme Thermophile Dictyoglomus thermophilum H-6-12.</title>
        <authorList>
            <person name="Coil D.A."/>
            <person name="Badger J.H."/>
            <person name="Forberger H.C."/>
            <person name="Riggs F."/>
            <person name="Madupu R."/>
            <person name="Fedorova N."/>
            <person name="Ward N."/>
            <person name="Robb F.T."/>
            <person name="Eisen J.A."/>
        </authorList>
    </citation>
    <scope>NUCLEOTIDE SEQUENCE [LARGE SCALE GENOMIC DNA]</scope>
    <source>
        <strain>ATCC 35947 / DSM 3960 / H-6-12</strain>
    </source>
</reference>
<organism>
    <name type="scientific">Dictyoglomus thermophilum (strain ATCC 35947 / DSM 3960 / H-6-12)</name>
    <dbReference type="NCBI Taxonomy" id="309799"/>
    <lineage>
        <taxon>Bacteria</taxon>
        <taxon>Pseudomonadati</taxon>
        <taxon>Dictyoglomota</taxon>
        <taxon>Dictyoglomia</taxon>
        <taxon>Dictyoglomales</taxon>
        <taxon>Dictyoglomaceae</taxon>
        <taxon>Dictyoglomus</taxon>
    </lineage>
</organism>
<gene>
    <name evidence="1" type="primary">atpD</name>
    <name type="ordered locus">DICTH_1858</name>
</gene>